<reference key="1">
    <citation type="submission" date="2007-07" db="EMBL/GenBank/DDBJ databases">
        <authorList>
            <consortium name="NIH - Zebrafish Gene Collection (ZGC) project"/>
        </authorList>
    </citation>
    <scope>NUCLEOTIDE SEQUENCE [LARGE SCALE MRNA]</scope>
    <source>
        <tissue>Larval eye</tissue>
    </source>
</reference>
<proteinExistence type="evidence at transcript level"/>
<gene>
    <name type="primary">emc10</name>
    <name type="ORF">zgc:171980</name>
</gene>
<keyword id="KW-0256">Endoplasmic reticulum</keyword>
<keyword id="KW-0472">Membrane</keyword>
<keyword id="KW-1185">Reference proteome</keyword>
<keyword id="KW-0732">Signal</keyword>
<keyword id="KW-0812">Transmembrane</keyword>
<keyword id="KW-1133">Transmembrane helix</keyword>
<sequence>MAPIRVLSLVLPILSTVTLLLTQFGECNNGRRSGDAVDTDFSGFSVPLEHSFEVDDVPRFRLRGALQFRGGRENSVYLSQNQLSEKDRNTLKDVAAVDGLYRIRVPRVSLQVDRQTERQYEGYLTAFVRACALVESHLSDVITLHTDVSGYVIGISIVTIPGSCRGIEVEDEVDLEVFNTTISVMAPVTAPVPETAPYIERMEMEMEKKGKNPQEQKSFFAKYWMYIVPLVLFLMMSGAQDQSGGGAGGGAANGGGR</sequence>
<name>EMC10_DANRE</name>
<accession>A7E2M3</accession>
<comment type="function">
    <text evidence="1">Part of the endoplasmic reticulum membrane protein complex (EMC) that enables the energy-independent insertion into endoplasmic reticulum membranes of newly synthesized membrane proteins. Preferentially accommodates proteins with transmembrane domains that are weakly hydrophobic or contain destabilizing features such as charged and aromatic residues. Involved in the cotranslational insertion of multi-pass membrane proteins in which stop-transfer membrane-anchor sequences become ER membrane spanning helices. It is also required for the post-translational insertion of tail-anchored/TA proteins in endoplasmic reticulum membranes. By mediating the proper cotranslational insertion of N-terminal transmembrane domains in an N-exo topology, with translocated N-terminus in the lumen of the ER, controls the topology of multi-pass membrane proteins like the G protein-coupled receptors. By regulating the insertion of various proteins in membranes, it is indirectly involved in many cellular processes. Promotes angiogenesis and tissue repair in the heart after myocardial infarction. Stimulates cardiac endothelial cell migration and outgrowth via the activation of p38 MAPK, PAK and MAPK2 signaling pathways.</text>
</comment>
<comment type="subunit">
    <text evidence="1">Component of the ER membrane protein complex (EMC).</text>
</comment>
<comment type="subcellular location">
    <subcellularLocation>
        <location evidence="1">Endoplasmic reticulum membrane</location>
        <topology evidence="1">Single-pass type I membrane protein</topology>
    </subcellularLocation>
</comment>
<comment type="similarity">
    <text evidence="3">Belongs to the EMC10 family.</text>
</comment>
<feature type="signal peptide" evidence="1">
    <location>
        <begin position="1"/>
        <end position="23"/>
    </location>
</feature>
<feature type="chain" id="PRO_0000315051" description="ER membrane protein complex subunit 10">
    <location>
        <begin position="24"/>
        <end position="257"/>
    </location>
</feature>
<feature type="topological domain" description="Lumenal" evidence="1">
    <location>
        <begin position="24"/>
        <end position="218"/>
    </location>
</feature>
<feature type="transmembrane region" description="Helical" evidence="2">
    <location>
        <begin position="219"/>
        <end position="239"/>
    </location>
</feature>
<feature type="topological domain" description="Cytoplasmic" evidence="1">
    <location>
        <begin position="240"/>
        <end position="257"/>
    </location>
</feature>
<protein>
    <recommendedName>
        <fullName>ER membrane protein complex subunit 10</fullName>
    </recommendedName>
</protein>
<dbReference type="EMBL" id="BC150420">
    <property type="protein sequence ID" value="AAI50421.1"/>
    <property type="molecule type" value="mRNA"/>
</dbReference>
<dbReference type="RefSeq" id="NP_001095859.2">
    <property type="nucleotide sequence ID" value="NM_001102389.2"/>
</dbReference>
<dbReference type="SMR" id="A7E2M3"/>
<dbReference type="FunCoup" id="A7E2M3">
    <property type="interactions" value="594"/>
</dbReference>
<dbReference type="STRING" id="7955.ENSDARP00000071497"/>
<dbReference type="PaxDb" id="7955-ENSDARP00000071497"/>
<dbReference type="PeptideAtlas" id="A7E2M3"/>
<dbReference type="GeneID" id="565829"/>
<dbReference type="KEGG" id="dre:565829"/>
<dbReference type="AGR" id="ZFIN:ZDB-GENE-030131-9045"/>
<dbReference type="CTD" id="284361"/>
<dbReference type="ZFIN" id="ZDB-GENE-030131-9045">
    <property type="gene designation" value="emc10"/>
</dbReference>
<dbReference type="eggNOG" id="KOG4827">
    <property type="taxonomic scope" value="Eukaryota"/>
</dbReference>
<dbReference type="InParanoid" id="A7E2M3"/>
<dbReference type="OrthoDB" id="1894652at2759"/>
<dbReference type="PhylomeDB" id="A7E2M3"/>
<dbReference type="PRO" id="PR:A7E2M3"/>
<dbReference type="Proteomes" id="UP000000437">
    <property type="component" value="Chromosome 3"/>
</dbReference>
<dbReference type="GO" id="GO:0072546">
    <property type="term" value="C:EMC complex"/>
    <property type="evidence" value="ECO:0000250"/>
    <property type="project" value="UniProtKB"/>
</dbReference>
<dbReference type="GO" id="GO:0005789">
    <property type="term" value="C:endoplasmic reticulum membrane"/>
    <property type="evidence" value="ECO:0000250"/>
    <property type="project" value="UniProtKB"/>
</dbReference>
<dbReference type="GO" id="GO:0016020">
    <property type="term" value="C:membrane"/>
    <property type="evidence" value="ECO:0000250"/>
    <property type="project" value="UniProtKB"/>
</dbReference>
<dbReference type="GO" id="GO:0045050">
    <property type="term" value="P:protein insertion into ER membrane by stop-transfer membrane-anchor sequence"/>
    <property type="evidence" value="ECO:0000250"/>
    <property type="project" value="UniProtKB"/>
</dbReference>
<dbReference type="GO" id="GO:0071816">
    <property type="term" value="P:tail-anchored membrane protein insertion into ER membrane"/>
    <property type="evidence" value="ECO:0000250"/>
    <property type="project" value="UniProtKB"/>
</dbReference>
<dbReference type="CDD" id="cd22209">
    <property type="entry name" value="EMC10"/>
    <property type="match status" value="1"/>
</dbReference>
<dbReference type="PANTHER" id="PTHR21397">
    <property type="entry name" value="CHROMATIN COMPLEXES SUBUNIT BAP18-RELATED"/>
    <property type="match status" value="1"/>
</dbReference>
<dbReference type="PANTHER" id="PTHR21397:SF4">
    <property type="entry name" value="ER MEMBRANE PROTEIN COMPLEX SUBUNIT 10"/>
    <property type="match status" value="1"/>
</dbReference>
<dbReference type="Pfam" id="PF21203">
    <property type="entry name" value="ECM10"/>
    <property type="match status" value="1"/>
</dbReference>
<organism>
    <name type="scientific">Danio rerio</name>
    <name type="common">Zebrafish</name>
    <name type="synonym">Brachydanio rerio</name>
    <dbReference type="NCBI Taxonomy" id="7955"/>
    <lineage>
        <taxon>Eukaryota</taxon>
        <taxon>Metazoa</taxon>
        <taxon>Chordata</taxon>
        <taxon>Craniata</taxon>
        <taxon>Vertebrata</taxon>
        <taxon>Euteleostomi</taxon>
        <taxon>Actinopterygii</taxon>
        <taxon>Neopterygii</taxon>
        <taxon>Teleostei</taxon>
        <taxon>Ostariophysi</taxon>
        <taxon>Cypriniformes</taxon>
        <taxon>Danionidae</taxon>
        <taxon>Danioninae</taxon>
        <taxon>Danio</taxon>
    </lineage>
</organism>
<evidence type="ECO:0000250" key="1">
    <source>
        <dbReference type="UniProtKB" id="Q5UCC4"/>
    </source>
</evidence>
<evidence type="ECO:0000255" key="2"/>
<evidence type="ECO:0000305" key="3"/>